<dbReference type="EMBL" id="U88191">
    <property type="protein sequence ID" value="AAC49903.1"/>
    <property type="status" value="ALT_FRAME"/>
    <property type="molecule type" value="Genomic_DNA"/>
</dbReference>
<dbReference type="EMBL" id="CU329671">
    <property type="protein sequence ID" value="CAA16826.1"/>
    <property type="molecule type" value="Genomic_DNA"/>
</dbReference>
<dbReference type="PIR" id="JC6500">
    <property type="entry name" value="JC6500"/>
</dbReference>
<dbReference type="PIR" id="T40493">
    <property type="entry name" value="T40493"/>
</dbReference>
<dbReference type="RefSeq" id="NP_596301.1">
    <property type="nucleotide sequence ID" value="NM_001022222.2"/>
</dbReference>
<dbReference type="SMR" id="O43058"/>
<dbReference type="BioGRID" id="277383">
    <property type="interactions" value="114"/>
</dbReference>
<dbReference type="STRING" id="284812.O43058"/>
<dbReference type="iPTMnet" id="O43058"/>
<dbReference type="PaxDb" id="4896-SPBC4C3.12.1"/>
<dbReference type="EnsemblFungi" id="SPBC4C3.12.1">
    <property type="protein sequence ID" value="SPBC4C3.12.1:pep"/>
    <property type="gene ID" value="SPBC4C3.12"/>
</dbReference>
<dbReference type="GeneID" id="2540866"/>
<dbReference type="KEGG" id="spo:2540866"/>
<dbReference type="PomBase" id="SPBC4C3.12">
    <property type="gene designation" value="sep1"/>
</dbReference>
<dbReference type="VEuPathDB" id="FungiDB:SPBC4C3.12"/>
<dbReference type="eggNOG" id="KOG2294">
    <property type="taxonomic scope" value="Eukaryota"/>
</dbReference>
<dbReference type="HOGENOM" id="CLU_408345_0_0_1"/>
<dbReference type="InParanoid" id="O43058"/>
<dbReference type="OMA" id="SYTRLTY"/>
<dbReference type="Reactome" id="R-SPO-3232118">
    <property type="pathway name" value="SUMOylation of transcription factors"/>
</dbReference>
<dbReference type="Reactome" id="R-SPO-9018519">
    <property type="pathway name" value="Estrogen-dependent gene expression"/>
</dbReference>
<dbReference type="PRO" id="PR:O43058"/>
<dbReference type="Proteomes" id="UP000002485">
    <property type="component" value="Chromosome II"/>
</dbReference>
<dbReference type="GO" id="GO:0000785">
    <property type="term" value="C:chromatin"/>
    <property type="evidence" value="ECO:0000314"/>
    <property type="project" value="PomBase"/>
</dbReference>
<dbReference type="GO" id="GO:0097221">
    <property type="term" value="C:M/G1 phase-specific MADS box-forkhead transcription factor complex"/>
    <property type="evidence" value="ECO:0000314"/>
    <property type="project" value="PomBase"/>
</dbReference>
<dbReference type="GO" id="GO:0005634">
    <property type="term" value="C:nucleus"/>
    <property type="evidence" value="ECO:0000314"/>
    <property type="project" value="PomBase"/>
</dbReference>
<dbReference type="GO" id="GO:0001228">
    <property type="term" value="F:DNA-binding transcription activator activity, RNA polymerase II-specific"/>
    <property type="evidence" value="ECO:0000315"/>
    <property type="project" value="PomBase"/>
</dbReference>
<dbReference type="GO" id="GO:0000981">
    <property type="term" value="F:DNA-binding transcription factor activity, RNA polymerase II-specific"/>
    <property type="evidence" value="ECO:0000318"/>
    <property type="project" value="GO_Central"/>
</dbReference>
<dbReference type="GO" id="GO:0000978">
    <property type="term" value="F:RNA polymerase II cis-regulatory region sequence-specific DNA binding"/>
    <property type="evidence" value="ECO:0000314"/>
    <property type="project" value="PomBase"/>
</dbReference>
<dbReference type="GO" id="GO:0000917">
    <property type="term" value="P:division septum assembly"/>
    <property type="evidence" value="ECO:0007669"/>
    <property type="project" value="UniProtKB-KW"/>
</dbReference>
<dbReference type="GO" id="GO:0000122">
    <property type="term" value="P:negative regulation of transcription by RNA polymerase II"/>
    <property type="evidence" value="ECO:0000315"/>
    <property type="project" value="PomBase"/>
</dbReference>
<dbReference type="GO" id="GO:0045944">
    <property type="term" value="P:positive regulation of transcription by RNA polymerase II"/>
    <property type="evidence" value="ECO:0000315"/>
    <property type="project" value="PomBase"/>
</dbReference>
<dbReference type="GO" id="GO:0006357">
    <property type="term" value="P:regulation of transcription by RNA polymerase II"/>
    <property type="evidence" value="ECO:0000318"/>
    <property type="project" value="GO_Central"/>
</dbReference>
<dbReference type="CDD" id="cd00059">
    <property type="entry name" value="FH_FOX"/>
    <property type="match status" value="1"/>
</dbReference>
<dbReference type="FunFam" id="1.10.10.10:FF:000260">
    <property type="entry name" value="Forkhead transcription factor (Sep1)"/>
    <property type="match status" value="1"/>
</dbReference>
<dbReference type="Gene3D" id="1.10.10.10">
    <property type="entry name" value="Winged helix-like DNA-binding domain superfamily/Winged helix DNA-binding domain"/>
    <property type="match status" value="1"/>
</dbReference>
<dbReference type="InterPro" id="IPR001766">
    <property type="entry name" value="Fork_head_dom"/>
</dbReference>
<dbReference type="InterPro" id="IPR050211">
    <property type="entry name" value="FOX_domain-containing"/>
</dbReference>
<dbReference type="InterPro" id="IPR030456">
    <property type="entry name" value="TF_fork_head_CS_2"/>
</dbReference>
<dbReference type="InterPro" id="IPR036388">
    <property type="entry name" value="WH-like_DNA-bd_sf"/>
</dbReference>
<dbReference type="InterPro" id="IPR036390">
    <property type="entry name" value="WH_DNA-bd_sf"/>
</dbReference>
<dbReference type="PANTHER" id="PTHR11829">
    <property type="entry name" value="FORKHEAD BOX PROTEIN"/>
    <property type="match status" value="1"/>
</dbReference>
<dbReference type="PANTHER" id="PTHR11829:SF399">
    <property type="entry name" value="FORKHEAD PROTEIN SEP1"/>
    <property type="match status" value="1"/>
</dbReference>
<dbReference type="Pfam" id="PF00250">
    <property type="entry name" value="Forkhead"/>
    <property type="match status" value="1"/>
</dbReference>
<dbReference type="PRINTS" id="PR00053">
    <property type="entry name" value="FORKHEAD"/>
</dbReference>
<dbReference type="SMART" id="SM00339">
    <property type="entry name" value="FH"/>
    <property type="match status" value="1"/>
</dbReference>
<dbReference type="SUPFAM" id="SSF46785">
    <property type="entry name" value="Winged helix' DNA-binding domain"/>
    <property type="match status" value="1"/>
</dbReference>
<dbReference type="PROSITE" id="PS00658">
    <property type="entry name" value="FORK_HEAD_2"/>
    <property type="match status" value="1"/>
</dbReference>
<dbReference type="PROSITE" id="PS50039">
    <property type="entry name" value="FORK_HEAD_3"/>
    <property type="match status" value="1"/>
</dbReference>
<organism>
    <name type="scientific">Schizosaccharomyces pombe (strain 972 / ATCC 24843)</name>
    <name type="common">Fission yeast</name>
    <dbReference type="NCBI Taxonomy" id="284812"/>
    <lineage>
        <taxon>Eukaryota</taxon>
        <taxon>Fungi</taxon>
        <taxon>Dikarya</taxon>
        <taxon>Ascomycota</taxon>
        <taxon>Taphrinomycotina</taxon>
        <taxon>Schizosaccharomycetes</taxon>
        <taxon>Schizosaccharomycetales</taxon>
        <taxon>Schizosaccharomycetaceae</taxon>
        <taxon>Schizosaccharomyces</taxon>
    </lineage>
</organism>
<evidence type="ECO:0000255" key="1">
    <source>
        <dbReference type="PROSITE-ProRule" id="PRU00089"/>
    </source>
</evidence>
<evidence type="ECO:0000256" key="2">
    <source>
        <dbReference type="SAM" id="MobiDB-lite"/>
    </source>
</evidence>
<evidence type="ECO:0000269" key="3">
    <source>
    </source>
</evidence>
<evidence type="ECO:0000269" key="4">
    <source>
    </source>
</evidence>
<evidence type="ECO:0000269" key="5">
    <source>
    </source>
</evidence>
<evidence type="ECO:0000305" key="6"/>
<gene>
    <name type="primary">sep1</name>
    <name type="ORF">SPBC4C3.12</name>
</gene>
<name>SEP1_SCHPO</name>
<feature type="chain" id="PRO_0000091907" description="Forkhead protein sep1">
    <location>
        <begin position="1"/>
        <end position="663"/>
    </location>
</feature>
<feature type="DNA-binding region" description="Fork-head" evidence="1">
    <location>
        <begin position="128"/>
        <end position="222"/>
    </location>
</feature>
<feature type="region of interest" description="Disordered" evidence="2">
    <location>
        <begin position="220"/>
        <end position="241"/>
    </location>
</feature>
<feature type="region of interest" description="Disordered" evidence="2">
    <location>
        <begin position="325"/>
        <end position="387"/>
    </location>
</feature>
<feature type="compositionally biased region" description="Low complexity" evidence="2">
    <location>
        <begin position="340"/>
        <end position="355"/>
    </location>
</feature>
<feature type="modified residue" description="Phosphoserine" evidence="4">
    <location>
        <position position="446"/>
    </location>
</feature>
<feature type="sequence conflict" description="In Ref. 1; AAC49903." evidence="6" ref="1">
    <original>PVSHLEKDVET</original>
    <variation>TCITFGEGCCN</variation>
    <location>
        <begin position="377"/>
        <end position="387"/>
    </location>
</feature>
<protein>
    <recommendedName>
        <fullName>Forkhead protein sep1</fullName>
    </recommendedName>
</protein>
<proteinExistence type="evidence at protein level"/>
<reference key="1">
    <citation type="journal article" date="1997" name="Gene">
        <title>sep1+ encodes a transcription-factor homologue of the HNF-3/forkhead DNA-binding-domain family in Schizosaccharomyces pombe.</title>
        <authorList>
            <person name="Ribar B."/>
            <person name="Banrevi A."/>
            <person name="Sipiczki M."/>
        </authorList>
    </citation>
    <scope>NUCLEOTIDE SEQUENCE [GENOMIC DNA]</scope>
    <scope>SUBCELLULAR LOCATION</scope>
</reference>
<reference key="2">
    <citation type="journal article" date="2002" name="Nature">
        <title>The genome sequence of Schizosaccharomyces pombe.</title>
        <authorList>
            <person name="Wood V."/>
            <person name="Gwilliam R."/>
            <person name="Rajandream M.A."/>
            <person name="Lyne M.H."/>
            <person name="Lyne R."/>
            <person name="Stewart A."/>
            <person name="Sgouros J.G."/>
            <person name="Peat N."/>
            <person name="Hayles J."/>
            <person name="Baker S.G."/>
            <person name="Basham D."/>
            <person name="Bowman S."/>
            <person name="Brooks K."/>
            <person name="Brown D."/>
            <person name="Brown S."/>
            <person name="Chillingworth T."/>
            <person name="Churcher C.M."/>
            <person name="Collins M."/>
            <person name="Connor R."/>
            <person name="Cronin A."/>
            <person name="Davis P."/>
            <person name="Feltwell T."/>
            <person name="Fraser A."/>
            <person name="Gentles S."/>
            <person name="Goble A."/>
            <person name="Hamlin N."/>
            <person name="Harris D.E."/>
            <person name="Hidalgo J."/>
            <person name="Hodgson G."/>
            <person name="Holroyd S."/>
            <person name="Hornsby T."/>
            <person name="Howarth S."/>
            <person name="Huckle E.J."/>
            <person name="Hunt S."/>
            <person name="Jagels K."/>
            <person name="James K.D."/>
            <person name="Jones L."/>
            <person name="Jones M."/>
            <person name="Leather S."/>
            <person name="McDonald S."/>
            <person name="McLean J."/>
            <person name="Mooney P."/>
            <person name="Moule S."/>
            <person name="Mungall K.L."/>
            <person name="Murphy L.D."/>
            <person name="Niblett D."/>
            <person name="Odell C."/>
            <person name="Oliver K."/>
            <person name="O'Neil S."/>
            <person name="Pearson D."/>
            <person name="Quail M.A."/>
            <person name="Rabbinowitsch E."/>
            <person name="Rutherford K.M."/>
            <person name="Rutter S."/>
            <person name="Saunders D."/>
            <person name="Seeger K."/>
            <person name="Sharp S."/>
            <person name="Skelton J."/>
            <person name="Simmonds M.N."/>
            <person name="Squares R."/>
            <person name="Squares S."/>
            <person name="Stevens K."/>
            <person name="Taylor K."/>
            <person name="Taylor R.G."/>
            <person name="Tivey A."/>
            <person name="Walsh S.V."/>
            <person name="Warren T."/>
            <person name="Whitehead S."/>
            <person name="Woodward J.R."/>
            <person name="Volckaert G."/>
            <person name="Aert R."/>
            <person name="Robben J."/>
            <person name="Grymonprez B."/>
            <person name="Weltjens I."/>
            <person name="Vanstreels E."/>
            <person name="Rieger M."/>
            <person name="Schaefer M."/>
            <person name="Mueller-Auer S."/>
            <person name="Gabel C."/>
            <person name="Fuchs M."/>
            <person name="Duesterhoeft A."/>
            <person name="Fritzc C."/>
            <person name="Holzer E."/>
            <person name="Moestl D."/>
            <person name="Hilbert H."/>
            <person name="Borzym K."/>
            <person name="Langer I."/>
            <person name="Beck A."/>
            <person name="Lehrach H."/>
            <person name="Reinhardt R."/>
            <person name="Pohl T.M."/>
            <person name="Eger P."/>
            <person name="Zimmermann W."/>
            <person name="Wedler H."/>
            <person name="Wambutt R."/>
            <person name="Purnelle B."/>
            <person name="Goffeau A."/>
            <person name="Cadieu E."/>
            <person name="Dreano S."/>
            <person name="Gloux S."/>
            <person name="Lelaure V."/>
            <person name="Mottier S."/>
            <person name="Galibert F."/>
            <person name="Aves S.J."/>
            <person name="Xiang Z."/>
            <person name="Hunt C."/>
            <person name="Moore K."/>
            <person name="Hurst S.M."/>
            <person name="Lucas M."/>
            <person name="Rochet M."/>
            <person name="Gaillardin C."/>
            <person name="Tallada V.A."/>
            <person name="Garzon A."/>
            <person name="Thode G."/>
            <person name="Daga R.R."/>
            <person name="Cruzado L."/>
            <person name="Jimenez J."/>
            <person name="Sanchez M."/>
            <person name="del Rey F."/>
            <person name="Benito J."/>
            <person name="Dominguez A."/>
            <person name="Revuelta J.L."/>
            <person name="Moreno S."/>
            <person name="Armstrong J."/>
            <person name="Forsburg S.L."/>
            <person name="Cerutti L."/>
            <person name="Lowe T."/>
            <person name="McCombie W.R."/>
            <person name="Paulsen I."/>
            <person name="Potashkin J."/>
            <person name="Shpakovski G.V."/>
            <person name="Ussery D."/>
            <person name="Barrell B.G."/>
            <person name="Nurse P."/>
        </authorList>
    </citation>
    <scope>NUCLEOTIDE SEQUENCE [LARGE SCALE GENOMIC DNA]</scope>
    <source>
        <strain>972 / ATCC 24843</strain>
    </source>
</reference>
<reference key="3">
    <citation type="journal article" date="2004" name="J. Cell Sci.">
        <title>Fkh2p and Sep1p regulate mitotic gene transcription in fission yeast.</title>
        <authorList>
            <person name="Buck V."/>
            <person name="Ng S.S."/>
            <person name="Ruiz-Garcia A.B."/>
            <person name="Papadopoulou K."/>
            <person name="Bhatti S."/>
            <person name="Samuel J.M."/>
            <person name="Anderson M."/>
            <person name="Millar J.B.A."/>
            <person name="McInerny C.J."/>
        </authorList>
    </citation>
    <scope>FUNCTION</scope>
</reference>
<reference key="4">
    <citation type="journal article" date="2008" name="J. Proteome Res.">
        <title>Phosphoproteome analysis of fission yeast.</title>
        <authorList>
            <person name="Wilson-Grady J.T."/>
            <person name="Villen J."/>
            <person name="Gygi S.P."/>
        </authorList>
    </citation>
    <scope>PHOSPHORYLATION [LARGE SCALE ANALYSIS] AT SER-446</scope>
    <scope>IDENTIFICATION BY MASS SPECTROMETRY</scope>
</reference>
<comment type="function">
    <text evidence="3">Required for promoter sequence element PCB-driven, M-phase-specific transcription. Acts as a transcriptional activator with a role in the regulation of mitosis. Regulates septation and the periodic transcription of cdc15.</text>
</comment>
<comment type="subcellular location">
    <subcellularLocation>
        <location evidence="1 5">Nucleus</location>
    </subcellularLocation>
</comment>
<comment type="sequence caution" evidence="6">
    <conflict type="frameshift">
        <sequence resource="EMBL-CDS" id="AAC49903"/>
    </conflict>
</comment>
<sequence>MNFNSTNPYYFTHEKNLNNASKYSELPIAYQEIPLQSLPPYPKVASKLKGVVAGGKENNIASFQKPSSKATRPYIPSYTRLTYSVPPLPIPPPSEQSLDTIIYRNPSVSSSQSQEPEEFFLPLDDGKKPPYSYAMLIGMSIIRSPDRRLTLSAIYDWISNTFSFYNKSNNGWQNSIRHNLSLNKAFMKIERPRNLPGKGHFWSIRPGHEEQFLKLKLRKPGVNSRPAPPVQDVTSSTKYGSSTGSSGFNTFNTSPHIFNQRHQYLQNYYTASLTNIPTISNVNATNFHPLHSQQPYVDTPGIDAPSDLEAKFSDLGVSSVVSVTSPLQSCTNSPSPPLSSPASSASPSESLRNESLGIKSAKSLGLNKDDAPVEGPPVSHLEKDVETPSVHDSVLGFNDTVTNLGKKGLKDGTTNTLQIPAVRLPSLPSSPTIKNPSGLLLKRSNSIDFPTPPKALCPKLFCFRDDIVADDYTKFSLLSPIRSDMSGISASPNTNLKEHRTRILQMLATPDAKQLSSLTSSDAEFWSVTPLKSSILRNGDASKQVTLSESPKGDSLLDGGSLSYFTNNISSVAGLETPSKLPMSKSFDTFEDDFLDPMDMLSFENHFSDFNSNRKVSPVKREVRRKYISSATTIHSSAAQDDTYLPSPTKRKMPLLRQTSTLF</sequence>
<accession>O43058</accession>
<accession>P79006</accession>
<keyword id="KW-0131">Cell cycle</keyword>
<keyword id="KW-0132">Cell division</keyword>
<keyword id="KW-0238">DNA-binding</keyword>
<keyword id="KW-0498">Mitosis</keyword>
<keyword id="KW-0539">Nucleus</keyword>
<keyword id="KW-0597">Phosphoprotein</keyword>
<keyword id="KW-1185">Reference proteome</keyword>
<keyword id="KW-0717">Septation</keyword>
<keyword id="KW-0804">Transcription</keyword>
<keyword id="KW-0805">Transcription regulation</keyword>